<accession>Q5M1U0</accession>
<sequence>MITQRQNAILNLIVEMFTRTHEPVCSKALQDSIDSSSATIRNDMAKLEKMGYLEKAHISSGRMPSRAGFQYFVANSLNLDTIDEQDVYQVVKAFDFEAFKLEDILDAAAKLLAEMTGCTAVIQDVEPTKQRLTGFEIVQLSNHDALAVLTLDESKPVTVQFAIPKNFLSSDLEIFHKLVQGRFLGNTVLDIHYRLRTETPQIVQKYFKITDNVLDLFDYIFSHLFKELIFIEGKVASLAYADLKTYQFLDNPQHVALALRSAISDDEVTKISVAESTEEALENVTVMSHKFLIPYRGTALMHVIGPIEMDYRRMVSLVNVISRVLVMKLTDYYRYLNSNHYEVFLSRNVLKNIERGECLD</sequence>
<comment type="function">
    <text evidence="1">Negative regulator of class I heat shock genes (grpE-dnaK-dnaJ and groELS operons). Prevents heat-shock induction of these operons.</text>
</comment>
<comment type="similarity">
    <text evidence="1">Belongs to the HrcA family.</text>
</comment>
<feature type="chain" id="PRO_1000010464" description="Heat-inducible transcription repressor HrcA">
    <location>
        <begin position="1"/>
        <end position="360"/>
    </location>
</feature>
<reference key="1">
    <citation type="journal article" date="2004" name="Nat. Biotechnol.">
        <title>Complete sequence and comparative genome analysis of the dairy bacterium Streptococcus thermophilus.</title>
        <authorList>
            <person name="Bolotin A."/>
            <person name="Quinquis B."/>
            <person name="Renault P."/>
            <person name="Sorokin A."/>
            <person name="Ehrlich S.D."/>
            <person name="Kulakauskas S."/>
            <person name="Lapidus A."/>
            <person name="Goltsman E."/>
            <person name="Mazur M."/>
            <person name="Pusch G.D."/>
            <person name="Fonstein M."/>
            <person name="Overbeek R."/>
            <person name="Kyprides N."/>
            <person name="Purnelle B."/>
            <person name="Prozzi D."/>
            <person name="Ngui K."/>
            <person name="Masuy D."/>
            <person name="Hancy F."/>
            <person name="Burteau S."/>
            <person name="Boutry M."/>
            <person name="Delcour J."/>
            <person name="Goffeau A."/>
            <person name="Hols P."/>
        </authorList>
    </citation>
    <scope>NUCLEOTIDE SEQUENCE [LARGE SCALE GENOMIC DNA]</scope>
    <source>
        <strain>CNRZ 1066</strain>
    </source>
</reference>
<organism>
    <name type="scientific">Streptococcus thermophilus (strain CNRZ 1066)</name>
    <dbReference type="NCBI Taxonomy" id="299768"/>
    <lineage>
        <taxon>Bacteria</taxon>
        <taxon>Bacillati</taxon>
        <taxon>Bacillota</taxon>
        <taxon>Bacilli</taxon>
        <taxon>Lactobacillales</taxon>
        <taxon>Streptococcaceae</taxon>
        <taxon>Streptococcus</taxon>
    </lineage>
</organism>
<dbReference type="EMBL" id="CP000024">
    <property type="protein sequence ID" value="AAV61733.1"/>
    <property type="molecule type" value="Genomic_DNA"/>
</dbReference>
<dbReference type="RefSeq" id="WP_011225328.1">
    <property type="nucleotide sequence ID" value="NC_006449.1"/>
</dbReference>
<dbReference type="SMR" id="Q5M1U0"/>
<dbReference type="GeneID" id="66898043"/>
<dbReference type="KEGG" id="stc:str0118"/>
<dbReference type="HOGENOM" id="CLU_050019_1_0_9"/>
<dbReference type="GO" id="GO:0003677">
    <property type="term" value="F:DNA binding"/>
    <property type="evidence" value="ECO:0007669"/>
    <property type="project" value="InterPro"/>
</dbReference>
<dbReference type="GO" id="GO:0045892">
    <property type="term" value="P:negative regulation of DNA-templated transcription"/>
    <property type="evidence" value="ECO:0007669"/>
    <property type="project" value="UniProtKB-UniRule"/>
</dbReference>
<dbReference type="Gene3D" id="3.30.450.40">
    <property type="match status" value="1"/>
</dbReference>
<dbReference type="Gene3D" id="3.30.390.60">
    <property type="entry name" value="Heat-inducible transcription repressor hrca homolog, domain 3"/>
    <property type="match status" value="1"/>
</dbReference>
<dbReference type="Gene3D" id="1.10.10.10">
    <property type="entry name" value="Winged helix-like DNA-binding domain superfamily/Winged helix DNA-binding domain"/>
    <property type="match status" value="1"/>
</dbReference>
<dbReference type="HAMAP" id="MF_00081">
    <property type="entry name" value="HrcA"/>
    <property type="match status" value="1"/>
</dbReference>
<dbReference type="InterPro" id="IPR029016">
    <property type="entry name" value="GAF-like_dom_sf"/>
</dbReference>
<dbReference type="InterPro" id="IPR002571">
    <property type="entry name" value="HrcA"/>
</dbReference>
<dbReference type="InterPro" id="IPR021153">
    <property type="entry name" value="HrcA_C"/>
</dbReference>
<dbReference type="InterPro" id="IPR036388">
    <property type="entry name" value="WH-like_DNA-bd_sf"/>
</dbReference>
<dbReference type="InterPro" id="IPR036390">
    <property type="entry name" value="WH_DNA-bd_sf"/>
</dbReference>
<dbReference type="InterPro" id="IPR005104">
    <property type="entry name" value="WHTH_HrcA_DNA-bd"/>
</dbReference>
<dbReference type="InterPro" id="IPR023120">
    <property type="entry name" value="WHTH_transcript_rep_HrcA_IDD"/>
</dbReference>
<dbReference type="NCBIfam" id="TIGR00331">
    <property type="entry name" value="hrcA"/>
    <property type="match status" value="1"/>
</dbReference>
<dbReference type="PANTHER" id="PTHR34824">
    <property type="entry name" value="HEAT-INDUCIBLE TRANSCRIPTION REPRESSOR HRCA"/>
    <property type="match status" value="1"/>
</dbReference>
<dbReference type="PANTHER" id="PTHR34824:SF1">
    <property type="entry name" value="HEAT-INDUCIBLE TRANSCRIPTION REPRESSOR HRCA"/>
    <property type="match status" value="1"/>
</dbReference>
<dbReference type="Pfam" id="PF01628">
    <property type="entry name" value="HrcA"/>
    <property type="match status" value="1"/>
</dbReference>
<dbReference type="Pfam" id="PF03444">
    <property type="entry name" value="HrcA_DNA-bdg"/>
    <property type="match status" value="1"/>
</dbReference>
<dbReference type="PIRSF" id="PIRSF005485">
    <property type="entry name" value="HrcA"/>
    <property type="match status" value="1"/>
</dbReference>
<dbReference type="SUPFAM" id="SSF55781">
    <property type="entry name" value="GAF domain-like"/>
    <property type="match status" value="1"/>
</dbReference>
<dbReference type="SUPFAM" id="SSF46785">
    <property type="entry name" value="Winged helix' DNA-binding domain"/>
    <property type="match status" value="1"/>
</dbReference>
<gene>
    <name evidence="1" type="primary">hrcA</name>
    <name type="ordered locus">str0118</name>
</gene>
<keyword id="KW-0678">Repressor</keyword>
<keyword id="KW-0346">Stress response</keyword>
<keyword id="KW-0804">Transcription</keyword>
<keyword id="KW-0805">Transcription regulation</keyword>
<name>HRCA_STRT1</name>
<proteinExistence type="inferred from homology"/>
<evidence type="ECO:0000255" key="1">
    <source>
        <dbReference type="HAMAP-Rule" id="MF_00081"/>
    </source>
</evidence>
<protein>
    <recommendedName>
        <fullName evidence="1">Heat-inducible transcription repressor HrcA</fullName>
    </recommendedName>
</protein>